<organism>
    <name type="scientific">Hydrogenovibrio crunogenus (strain DSM 25203 / XCL-2)</name>
    <name type="common">Thiomicrospira crunogena</name>
    <dbReference type="NCBI Taxonomy" id="317025"/>
    <lineage>
        <taxon>Bacteria</taxon>
        <taxon>Pseudomonadati</taxon>
        <taxon>Pseudomonadota</taxon>
        <taxon>Gammaproteobacteria</taxon>
        <taxon>Thiotrichales</taxon>
        <taxon>Piscirickettsiaceae</taxon>
        <taxon>Hydrogenovibrio</taxon>
    </lineage>
</organism>
<proteinExistence type="inferred from homology"/>
<accession>Q31IZ0</accession>
<dbReference type="EMBL" id="CP000109">
    <property type="protein sequence ID" value="ABB40883.1"/>
    <property type="molecule type" value="Genomic_DNA"/>
</dbReference>
<dbReference type="SMR" id="Q31IZ0"/>
<dbReference type="STRING" id="317025.Tcr_0287"/>
<dbReference type="KEGG" id="tcx:Tcr_0287"/>
<dbReference type="eggNOG" id="COG0222">
    <property type="taxonomic scope" value="Bacteria"/>
</dbReference>
<dbReference type="HOGENOM" id="CLU_086499_3_2_6"/>
<dbReference type="OrthoDB" id="9811748at2"/>
<dbReference type="GO" id="GO:0022625">
    <property type="term" value="C:cytosolic large ribosomal subunit"/>
    <property type="evidence" value="ECO:0007669"/>
    <property type="project" value="TreeGrafter"/>
</dbReference>
<dbReference type="GO" id="GO:0003729">
    <property type="term" value="F:mRNA binding"/>
    <property type="evidence" value="ECO:0007669"/>
    <property type="project" value="TreeGrafter"/>
</dbReference>
<dbReference type="GO" id="GO:0003735">
    <property type="term" value="F:structural constituent of ribosome"/>
    <property type="evidence" value="ECO:0007669"/>
    <property type="project" value="InterPro"/>
</dbReference>
<dbReference type="GO" id="GO:0006412">
    <property type="term" value="P:translation"/>
    <property type="evidence" value="ECO:0007669"/>
    <property type="project" value="UniProtKB-UniRule"/>
</dbReference>
<dbReference type="CDD" id="cd00387">
    <property type="entry name" value="Ribosomal_L7_L12"/>
    <property type="match status" value="1"/>
</dbReference>
<dbReference type="FunFam" id="3.30.1390.10:FF:000001">
    <property type="entry name" value="50S ribosomal protein L7/L12"/>
    <property type="match status" value="1"/>
</dbReference>
<dbReference type="Gene3D" id="3.30.1390.10">
    <property type="match status" value="1"/>
</dbReference>
<dbReference type="Gene3D" id="1.20.5.710">
    <property type="entry name" value="Single helix bin"/>
    <property type="match status" value="1"/>
</dbReference>
<dbReference type="HAMAP" id="MF_00368">
    <property type="entry name" value="Ribosomal_bL12"/>
    <property type="match status" value="1"/>
</dbReference>
<dbReference type="InterPro" id="IPR000206">
    <property type="entry name" value="Ribosomal_bL12"/>
</dbReference>
<dbReference type="InterPro" id="IPR013823">
    <property type="entry name" value="Ribosomal_bL12_C"/>
</dbReference>
<dbReference type="InterPro" id="IPR014719">
    <property type="entry name" value="Ribosomal_bL12_C/ClpS-like"/>
</dbReference>
<dbReference type="InterPro" id="IPR008932">
    <property type="entry name" value="Ribosomal_bL12_oligo"/>
</dbReference>
<dbReference type="InterPro" id="IPR036235">
    <property type="entry name" value="Ribosomal_bL12_oligo_N_sf"/>
</dbReference>
<dbReference type="NCBIfam" id="TIGR00855">
    <property type="entry name" value="L12"/>
    <property type="match status" value="1"/>
</dbReference>
<dbReference type="PANTHER" id="PTHR45987">
    <property type="entry name" value="39S RIBOSOMAL PROTEIN L12"/>
    <property type="match status" value="1"/>
</dbReference>
<dbReference type="PANTHER" id="PTHR45987:SF4">
    <property type="entry name" value="LARGE RIBOSOMAL SUBUNIT PROTEIN BL12M"/>
    <property type="match status" value="1"/>
</dbReference>
<dbReference type="Pfam" id="PF00542">
    <property type="entry name" value="Ribosomal_L12"/>
    <property type="match status" value="1"/>
</dbReference>
<dbReference type="Pfam" id="PF16320">
    <property type="entry name" value="Ribosomal_L12_N"/>
    <property type="match status" value="1"/>
</dbReference>
<dbReference type="SUPFAM" id="SSF54736">
    <property type="entry name" value="ClpS-like"/>
    <property type="match status" value="1"/>
</dbReference>
<dbReference type="SUPFAM" id="SSF48300">
    <property type="entry name" value="Ribosomal protein L7/12, oligomerisation (N-terminal) domain"/>
    <property type="match status" value="1"/>
</dbReference>
<gene>
    <name evidence="1" type="primary">rplL</name>
    <name type="ordered locus">Tcr_0287</name>
</gene>
<evidence type="ECO:0000255" key="1">
    <source>
        <dbReference type="HAMAP-Rule" id="MF_00368"/>
    </source>
</evidence>
<evidence type="ECO:0000305" key="2"/>
<name>RL7_HYDCU</name>
<keyword id="KW-0687">Ribonucleoprotein</keyword>
<keyword id="KW-0689">Ribosomal protein</keyword>
<comment type="function">
    <text evidence="1">Forms part of the ribosomal stalk which helps the ribosome interact with GTP-bound translation factors. Is thus essential for accurate translation.</text>
</comment>
<comment type="subunit">
    <text evidence="1">Homodimer. Part of the ribosomal stalk of the 50S ribosomal subunit. Forms a multimeric L10(L12)X complex, where L10 forms an elongated spine to which 2 to 4 L12 dimers bind in a sequential fashion. Binds GTP-bound translation factors.</text>
</comment>
<comment type="similarity">
    <text evidence="1">Belongs to the bacterial ribosomal protein bL12 family.</text>
</comment>
<sequence>MAITKDDILEAVANMSVMEVVELVEAMEEKFGVSAAAVAVAGPAGDAGAAGEEQTEFDVVLTGAGDNKVAAIKAVRGATGLGLKEAKSAVESAPFTLKEGVSKEEAETLANELKEAGIEVEVK</sequence>
<feature type="chain" id="PRO_0000243520" description="Large ribosomal subunit protein bL12">
    <location>
        <begin position="1"/>
        <end position="123"/>
    </location>
</feature>
<reference key="1">
    <citation type="journal article" date="2006" name="PLoS Biol.">
        <title>The genome of deep-sea vent chemolithoautotroph Thiomicrospira crunogena XCL-2.</title>
        <authorList>
            <person name="Scott K.M."/>
            <person name="Sievert S.M."/>
            <person name="Abril F.N."/>
            <person name="Ball L.A."/>
            <person name="Barrett C.J."/>
            <person name="Blake R.A."/>
            <person name="Boller A.J."/>
            <person name="Chain P.S.G."/>
            <person name="Clark J.A."/>
            <person name="Davis C.R."/>
            <person name="Detter C."/>
            <person name="Do K.F."/>
            <person name="Dobrinski K.P."/>
            <person name="Faza B.I."/>
            <person name="Fitzpatrick K.A."/>
            <person name="Freyermuth S.K."/>
            <person name="Harmer T.L."/>
            <person name="Hauser L.J."/>
            <person name="Huegler M."/>
            <person name="Kerfeld C.A."/>
            <person name="Klotz M.G."/>
            <person name="Kong W.W."/>
            <person name="Land M."/>
            <person name="Lapidus A."/>
            <person name="Larimer F.W."/>
            <person name="Longo D.L."/>
            <person name="Lucas S."/>
            <person name="Malfatti S.A."/>
            <person name="Massey S.E."/>
            <person name="Martin D.D."/>
            <person name="McCuddin Z."/>
            <person name="Meyer F."/>
            <person name="Moore J.L."/>
            <person name="Ocampo L.H. Jr."/>
            <person name="Paul J.H."/>
            <person name="Paulsen I.T."/>
            <person name="Reep D.K."/>
            <person name="Ren Q."/>
            <person name="Ross R.L."/>
            <person name="Sato P.Y."/>
            <person name="Thomas P."/>
            <person name="Tinkham L.E."/>
            <person name="Zeruth G.T."/>
        </authorList>
    </citation>
    <scope>NUCLEOTIDE SEQUENCE [LARGE SCALE GENOMIC DNA]</scope>
    <source>
        <strain>DSM 25203 / XCL-2</strain>
    </source>
</reference>
<protein>
    <recommendedName>
        <fullName evidence="1">Large ribosomal subunit protein bL12</fullName>
    </recommendedName>
    <alternativeName>
        <fullName evidence="2">50S ribosomal protein L7/L12</fullName>
    </alternativeName>
</protein>